<reference key="1">
    <citation type="journal article" date="2008" name="J. Bacteriol.">
        <title>The pangenome structure of Escherichia coli: comparative genomic analysis of E. coli commensal and pathogenic isolates.</title>
        <authorList>
            <person name="Rasko D.A."/>
            <person name="Rosovitz M.J."/>
            <person name="Myers G.S.A."/>
            <person name="Mongodin E.F."/>
            <person name="Fricke W.F."/>
            <person name="Gajer P."/>
            <person name="Crabtree J."/>
            <person name="Sebaihia M."/>
            <person name="Thomson N.R."/>
            <person name="Chaudhuri R."/>
            <person name="Henderson I.R."/>
            <person name="Sperandio V."/>
            <person name="Ravel J."/>
        </authorList>
    </citation>
    <scope>NUCLEOTIDE SEQUENCE [LARGE SCALE GENOMIC DNA]</scope>
    <source>
        <strain>E24377A / ETEC</strain>
    </source>
</reference>
<protein>
    <recommendedName>
        <fullName evidence="1">Succinate--CoA ligase [ADP-forming] subunit beta</fullName>
        <ecNumber evidence="1">6.2.1.5</ecNumber>
    </recommendedName>
    <alternativeName>
        <fullName evidence="1">Succinyl-CoA synthetase subunit beta</fullName>
        <shortName evidence="1">SCS-beta</shortName>
    </alternativeName>
</protein>
<feature type="chain" id="PRO_1000082073" description="Succinate--CoA ligase [ADP-forming] subunit beta">
    <location>
        <begin position="1"/>
        <end position="388"/>
    </location>
</feature>
<feature type="domain" description="ATP-grasp" evidence="1">
    <location>
        <begin position="9"/>
        <end position="244"/>
    </location>
</feature>
<feature type="binding site" evidence="1">
    <location>
        <position position="46"/>
    </location>
    <ligand>
        <name>ATP</name>
        <dbReference type="ChEBI" id="CHEBI:30616"/>
    </ligand>
</feature>
<feature type="binding site" evidence="1">
    <location>
        <begin position="53"/>
        <end position="55"/>
    </location>
    <ligand>
        <name>ATP</name>
        <dbReference type="ChEBI" id="CHEBI:30616"/>
    </ligand>
</feature>
<feature type="binding site" evidence="1">
    <location>
        <position position="99"/>
    </location>
    <ligand>
        <name>ATP</name>
        <dbReference type="ChEBI" id="CHEBI:30616"/>
    </ligand>
</feature>
<feature type="binding site" evidence="1">
    <location>
        <position position="102"/>
    </location>
    <ligand>
        <name>ATP</name>
        <dbReference type="ChEBI" id="CHEBI:30616"/>
    </ligand>
</feature>
<feature type="binding site" evidence="1">
    <location>
        <position position="107"/>
    </location>
    <ligand>
        <name>ATP</name>
        <dbReference type="ChEBI" id="CHEBI:30616"/>
    </ligand>
</feature>
<feature type="binding site" evidence="1">
    <location>
        <position position="199"/>
    </location>
    <ligand>
        <name>Mg(2+)</name>
        <dbReference type="ChEBI" id="CHEBI:18420"/>
    </ligand>
</feature>
<feature type="binding site" evidence="1">
    <location>
        <position position="213"/>
    </location>
    <ligand>
        <name>Mg(2+)</name>
        <dbReference type="ChEBI" id="CHEBI:18420"/>
    </ligand>
</feature>
<feature type="binding site" evidence="1">
    <location>
        <position position="264"/>
    </location>
    <ligand>
        <name>substrate</name>
        <note>ligand shared with subunit alpha</note>
    </ligand>
</feature>
<feature type="binding site" evidence="1">
    <location>
        <begin position="321"/>
        <end position="323"/>
    </location>
    <ligand>
        <name>substrate</name>
        <note>ligand shared with subunit alpha</note>
    </ligand>
</feature>
<gene>
    <name evidence="1" type="primary">sucC</name>
    <name type="ordered locus">EcE24377A_0754</name>
</gene>
<sequence>MNLHEYQAKQLFARYGLPAPVGYACTTPREAEEAASKIGAGPWVVKCQVHAGGRGKAGGVKVVNSKEDIRAFAENWLGKRLVTYQTDANGQPVNQILVEAATDIAKELYLGAVVDRSSRRVVFMASTEGGVEIEKVAEETPHLIHKVALDPLTGPMPYQGRELAFKLGLEGKLVQQFTKIFMGLATIFLERDLALIEINPLVITKQGDLICLDGKLGADGNALFRQPDLREMRDQSQEDPREAQAAQWELNYVALDGNIGCMVNGAGLAMGTMDIVKLHGGEPANFLDVGGGATKERVTEAFKIILSDDKVKAVLVNIFGGIVRCDLIADGIIGAVAEVGVNVPVVVRLEGNNAELGAKKLADSGLNIIAAKGLTDAAQQVVAAVEGK</sequence>
<organism>
    <name type="scientific">Escherichia coli O139:H28 (strain E24377A / ETEC)</name>
    <dbReference type="NCBI Taxonomy" id="331111"/>
    <lineage>
        <taxon>Bacteria</taxon>
        <taxon>Pseudomonadati</taxon>
        <taxon>Pseudomonadota</taxon>
        <taxon>Gammaproteobacteria</taxon>
        <taxon>Enterobacterales</taxon>
        <taxon>Enterobacteriaceae</taxon>
        <taxon>Escherichia</taxon>
    </lineage>
</organism>
<evidence type="ECO:0000255" key="1">
    <source>
        <dbReference type="HAMAP-Rule" id="MF_00558"/>
    </source>
</evidence>
<accession>A7ZJA8</accession>
<name>SUCC_ECO24</name>
<dbReference type="EC" id="6.2.1.5" evidence="1"/>
<dbReference type="EMBL" id="CP000800">
    <property type="protein sequence ID" value="ABV18382.1"/>
    <property type="molecule type" value="Genomic_DNA"/>
</dbReference>
<dbReference type="RefSeq" id="WP_001048602.1">
    <property type="nucleotide sequence ID" value="NC_009801.1"/>
</dbReference>
<dbReference type="SMR" id="A7ZJA8"/>
<dbReference type="GeneID" id="93776757"/>
<dbReference type="KEGG" id="ecw:EcE24377A_0754"/>
<dbReference type="HOGENOM" id="CLU_037430_4_0_6"/>
<dbReference type="UniPathway" id="UPA00223">
    <property type="reaction ID" value="UER00999"/>
</dbReference>
<dbReference type="Proteomes" id="UP000001122">
    <property type="component" value="Chromosome"/>
</dbReference>
<dbReference type="GO" id="GO:0005829">
    <property type="term" value="C:cytosol"/>
    <property type="evidence" value="ECO:0007669"/>
    <property type="project" value="TreeGrafter"/>
</dbReference>
<dbReference type="GO" id="GO:0042709">
    <property type="term" value="C:succinate-CoA ligase complex"/>
    <property type="evidence" value="ECO:0007669"/>
    <property type="project" value="TreeGrafter"/>
</dbReference>
<dbReference type="GO" id="GO:0005524">
    <property type="term" value="F:ATP binding"/>
    <property type="evidence" value="ECO:0007669"/>
    <property type="project" value="UniProtKB-UniRule"/>
</dbReference>
<dbReference type="GO" id="GO:0000287">
    <property type="term" value="F:magnesium ion binding"/>
    <property type="evidence" value="ECO:0007669"/>
    <property type="project" value="UniProtKB-UniRule"/>
</dbReference>
<dbReference type="GO" id="GO:0004775">
    <property type="term" value="F:succinate-CoA ligase (ADP-forming) activity"/>
    <property type="evidence" value="ECO:0007669"/>
    <property type="project" value="UniProtKB-UniRule"/>
</dbReference>
<dbReference type="GO" id="GO:0004776">
    <property type="term" value="F:succinate-CoA ligase (GDP-forming) activity"/>
    <property type="evidence" value="ECO:0007669"/>
    <property type="project" value="RHEA"/>
</dbReference>
<dbReference type="GO" id="GO:0006104">
    <property type="term" value="P:succinyl-CoA metabolic process"/>
    <property type="evidence" value="ECO:0007669"/>
    <property type="project" value="TreeGrafter"/>
</dbReference>
<dbReference type="GO" id="GO:0006099">
    <property type="term" value="P:tricarboxylic acid cycle"/>
    <property type="evidence" value="ECO:0007669"/>
    <property type="project" value="UniProtKB-UniRule"/>
</dbReference>
<dbReference type="FunFam" id="3.30.1490.20:FF:000002">
    <property type="entry name" value="Succinate--CoA ligase [ADP-forming] subunit beta"/>
    <property type="match status" value="1"/>
</dbReference>
<dbReference type="FunFam" id="3.30.470.20:FF:000002">
    <property type="entry name" value="Succinate--CoA ligase [ADP-forming] subunit beta"/>
    <property type="match status" value="1"/>
</dbReference>
<dbReference type="FunFam" id="3.40.50.261:FF:000001">
    <property type="entry name" value="Succinate--CoA ligase [ADP-forming] subunit beta"/>
    <property type="match status" value="1"/>
</dbReference>
<dbReference type="Gene3D" id="3.30.1490.20">
    <property type="entry name" value="ATP-grasp fold, A domain"/>
    <property type="match status" value="1"/>
</dbReference>
<dbReference type="Gene3D" id="3.30.470.20">
    <property type="entry name" value="ATP-grasp fold, B domain"/>
    <property type="match status" value="1"/>
</dbReference>
<dbReference type="Gene3D" id="3.40.50.261">
    <property type="entry name" value="Succinyl-CoA synthetase domains"/>
    <property type="match status" value="1"/>
</dbReference>
<dbReference type="HAMAP" id="MF_00558">
    <property type="entry name" value="Succ_CoA_beta"/>
    <property type="match status" value="1"/>
</dbReference>
<dbReference type="InterPro" id="IPR011761">
    <property type="entry name" value="ATP-grasp"/>
</dbReference>
<dbReference type="InterPro" id="IPR013650">
    <property type="entry name" value="ATP-grasp_succ-CoA_synth-type"/>
</dbReference>
<dbReference type="InterPro" id="IPR013815">
    <property type="entry name" value="ATP_grasp_subdomain_1"/>
</dbReference>
<dbReference type="InterPro" id="IPR017866">
    <property type="entry name" value="Succ-CoA_synthase_bsu_CS"/>
</dbReference>
<dbReference type="InterPro" id="IPR005811">
    <property type="entry name" value="SUCC_ACL_C"/>
</dbReference>
<dbReference type="InterPro" id="IPR005809">
    <property type="entry name" value="Succ_CoA_ligase-like_bsu"/>
</dbReference>
<dbReference type="InterPro" id="IPR016102">
    <property type="entry name" value="Succinyl-CoA_synth-like"/>
</dbReference>
<dbReference type="NCBIfam" id="NF001913">
    <property type="entry name" value="PRK00696.1"/>
    <property type="match status" value="1"/>
</dbReference>
<dbReference type="NCBIfam" id="TIGR01016">
    <property type="entry name" value="sucCoAbeta"/>
    <property type="match status" value="1"/>
</dbReference>
<dbReference type="PANTHER" id="PTHR11815:SF10">
    <property type="entry name" value="SUCCINATE--COA LIGASE [GDP-FORMING] SUBUNIT BETA, MITOCHONDRIAL"/>
    <property type="match status" value="1"/>
</dbReference>
<dbReference type="PANTHER" id="PTHR11815">
    <property type="entry name" value="SUCCINYL-COA SYNTHETASE BETA CHAIN"/>
    <property type="match status" value="1"/>
</dbReference>
<dbReference type="Pfam" id="PF08442">
    <property type="entry name" value="ATP-grasp_2"/>
    <property type="match status" value="1"/>
</dbReference>
<dbReference type="Pfam" id="PF00549">
    <property type="entry name" value="Ligase_CoA"/>
    <property type="match status" value="1"/>
</dbReference>
<dbReference type="PIRSF" id="PIRSF001554">
    <property type="entry name" value="SucCS_beta"/>
    <property type="match status" value="1"/>
</dbReference>
<dbReference type="SUPFAM" id="SSF56059">
    <property type="entry name" value="Glutathione synthetase ATP-binding domain-like"/>
    <property type="match status" value="1"/>
</dbReference>
<dbReference type="SUPFAM" id="SSF52210">
    <property type="entry name" value="Succinyl-CoA synthetase domains"/>
    <property type="match status" value="1"/>
</dbReference>
<dbReference type="PROSITE" id="PS50975">
    <property type="entry name" value="ATP_GRASP"/>
    <property type="match status" value="1"/>
</dbReference>
<dbReference type="PROSITE" id="PS01217">
    <property type="entry name" value="SUCCINYL_COA_LIG_3"/>
    <property type="match status" value="1"/>
</dbReference>
<proteinExistence type="inferred from homology"/>
<keyword id="KW-0067">ATP-binding</keyword>
<keyword id="KW-0436">Ligase</keyword>
<keyword id="KW-0460">Magnesium</keyword>
<keyword id="KW-0479">Metal-binding</keyword>
<keyword id="KW-0547">Nucleotide-binding</keyword>
<keyword id="KW-1185">Reference proteome</keyword>
<keyword id="KW-0816">Tricarboxylic acid cycle</keyword>
<comment type="function">
    <text evidence="1">Succinyl-CoA synthetase functions in the citric acid cycle (TCA), coupling the hydrolysis of succinyl-CoA to the synthesis of either ATP or GTP and thus represents the only step of substrate-level phosphorylation in the TCA. The beta subunit provides nucleotide specificity of the enzyme and binds the substrate succinate, while the binding sites for coenzyme A and phosphate are found in the alpha subunit.</text>
</comment>
<comment type="catalytic activity">
    <reaction evidence="1">
        <text>succinate + ATP + CoA = succinyl-CoA + ADP + phosphate</text>
        <dbReference type="Rhea" id="RHEA:17661"/>
        <dbReference type="ChEBI" id="CHEBI:30031"/>
        <dbReference type="ChEBI" id="CHEBI:30616"/>
        <dbReference type="ChEBI" id="CHEBI:43474"/>
        <dbReference type="ChEBI" id="CHEBI:57287"/>
        <dbReference type="ChEBI" id="CHEBI:57292"/>
        <dbReference type="ChEBI" id="CHEBI:456216"/>
        <dbReference type="EC" id="6.2.1.5"/>
    </reaction>
    <physiologicalReaction direction="right-to-left" evidence="1">
        <dbReference type="Rhea" id="RHEA:17663"/>
    </physiologicalReaction>
</comment>
<comment type="catalytic activity">
    <reaction evidence="1">
        <text>GTP + succinate + CoA = succinyl-CoA + GDP + phosphate</text>
        <dbReference type="Rhea" id="RHEA:22120"/>
        <dbReference type="ChEBI" id="CHEBI:30031"/>
        <dbReference type="ChEBI" id="CHEBI:37565"/>
        <dbReference type="ChEBI" id="CHEBI:43474"/>
        <dbReference type="ChEBI" id="CHEBI:57287"/>
        <dbReference type="ChEBI" id="CHEBI:57292"/>
        <dbReference type="ChEBI" id="CHEBI:58189"/>
    </reaction>
    <physiologicalReaction direction="right-to-left" evidence="1">
        <dbReference type="Rhea" id="RHEA:22122"/>
    </physiologicalReaction>
</comment>
<comment type="cofactor">
    <cofactor evidence="1">
        <name>Mg(2+)</name>
        <dbReference type="ChEBI" id="CHEBI:18420"/>
    </cofactor>
    <text evidence="1">Binds 1 Mg(2+) ion per subunit.</text>
</comment>
<comment type="pathway">
    <text evidence="1">Carbohydrate metabolism; tricarboxylic acid cycle; succinate from succinyl-CoA (ligase route): step 1/1.</text>
</comment>
<comment type="subunit">
    <text evidence="1">Heterotetramer of two alpha and two beta subunits.</text>
</comment>
<comment type="similarity">
    <text evidence="1">Belongs to the succinate/malate CoA ligase beta subunit family.</text>
</comment>